<comment type="function">
    <text evidence="1">Binds to the 23S rRNA.</text>
</comment>
<comment type="subunit">
    <text evidence="1">Part of the 50S ribosomal subunit.</text>
</comment>
<comment type="similarity">
    <text evidence="1">Belongs to the universal ribosomal protein uL15 family.</text>
</comment>
<feature type="chain" id="PRO_1000142799" description="Large ribosomal subunit protein uL15">
    <location>
        <begin position="1"/>
        <end position="148"/>
    </location>
</feature>
<feature type="region of interest" description="Disordered" evidence="2">
    <location>
        <begin position="1"/>
        <end position="45"/>
    </location>
</feature>
<feature type="compositionally biased region" description="Basic and acidic residues" evidence="2">
    <location>
        <begin position="1"/>
        <end position="12"/>
    </location>
</feature>
<protein>
    <recommendedName>
        <fullName evidence="1">Large ribosomal subunit protein uL15</fullName>
    </recommendedName>
    <alternativeName>
        <fullName evidence="3">50S ribosomal protein L15</fullName>
    </alternativeName>
</protein>
<keyword id="KW-1185">Reference proteome</keyword>
<keyword id="KW-0687">Ribonucleoprotein</keyword>
<keyword id="KW-0689">Ribosomal protein</keyword>
<keyword id="KW-0694">RNA-binding</keyword>
<keyword id="KW-0699">rRNA-binding</keyword>
<name>RL15_CORU7</name>
<organism>
    <name type="scientific">Corynebacterium urealyticum (strain ATCC 43042 / DSM 7109)</name>
    <dbReference type="NCBI Taxonomy" id="504474"/>
    <lineage>
        <taxon>Bacteria</taxon>
        <taxon>Bacillati</taxon>
        <taxon>Actinomycetota</taxon>
        <taxon>Actinomycetes</taxon>
        <taxon>Mycobacteriales</taxon>
        <taxon>Corynebacteriaceae</taxon>
        <taxon>Corynebacterium</taxon>
    </lineage>
</organism>
<proteinExistence type="inferred from homology"/>
<evidence type="ECO:0000255" key="1">
    <source>
        <dbReference type="HAMAP-Rule" id="MF_01341"/>
    </source>
</evidence>
<evidence type="ECO:0000256" key="2">
    <source>
        <dbReference type="SAM" id="MobiDB-lite"/>
    </source>
</evidence>
<evidence type="ECO:0000305" key="3"/>
<dbReference type="EMBL" id="AM942444">
    <property type="protein sequence ID" value="CAQ04313.1"/>
    <property type="molecule type" value="Genomic_DNA"/>
</dbReference>
<dbReference type="RefSeq" id="WP_012359606.1">
    <property type="nucleotide sequence ID" value="NC_010545.1"/>
</dbReference>
<dbReference type="SMR" id="B1VEX4"/>
<dbReference type="STRING" id="504474.cu0353"/>
<dbReference type="GeneID" id="60605156"/>
<dbReference type="KEGG" id="cur:cu0353"/>
<dbReference type="eggNOG" id="COG0200">
    <property type="taxonomic scope" value="Bacteria"/>
</dbReference>
<dbReference type="HOGENOM" id="CLU_055188_4_1_11"/>
<dbReference type="Proteomes" id="UP000001727">
    <property type="component" value="Chromosome"/>
</dbReference>
<dbReference type="GO" id="GO:0022625">
    <property type="term" value="C:cytosolic large ribosomal subunit"/>
    <property type="evidence" value="ECO:0007669"/>
    <property type="project" value="TreeGrafter"/>
</dbReference>
<dbReference type="GO" id="GO:0019843">
    <property type="term" value="F:rRNA binding"/>
    <property type="evidence" value="ECO:0007669"/>
    <property type="project" value="UniProtKB-UniRule"/>
</dbReference>
<dbReference type="GO" id="GO:0003735">
    <property type="term" value="F:structural constituent of ribosome"/>
    <property type="evidence" value="ECO:0007669"/>
    <property type="project" value="InterPro"/>
</dbReference>
<dbReference type="GO" id="GO:0006412">
    <property type="term" value="P:translation"/>
    <property type="evidence" value="ECO:0007669"/>
    <property type="project" value="UniProtKB-UniRule"/>
</dbReference>
<dbReference type="FunFam" id="3.100.10.10:FF:000005">
    <property type="entry name" value="50S ribosomal protein L15"/>
    <property type="match status" value="1"/>
</dbReference>
<dbReference type="Gene3D" id="3.100.10.10">
    <property type="match status" value="1"/>
</dbReference>
<dbReference type="HAMAP" id="MF_01341">
    <property type="entry name" value="Ribosomal_uL15"/>
    <property type="match status" value="1"/>
</dbReference>
<dbReference type="InterPro" id="IPR030878">
    <property type="entry name" value="Ribosomal_uL15"/>
</dbReference>
<dbReference type="InterPro" id="IPR021131">
    <property type="entry name" value="Ribosomal_uL15/eL18"/>
</dbReference>
<dbReference type="InterPro" id="IPR036227">
    <property type="entry name" value="Ribosomal_uL15/eL18_sf"/>
</dbReference>
<dbReference type="InterPro" id="IPR005749">
    <property type="entry name" value="Ribosomal_uL15_bac-type"/>
</dbReference>
<dbReference type="InterPro" id="IPR001196">
    <property type="entry name" value="Ribosomal_uL15_CS"/>
</dbReference>
<dbReference type="NCBIfam" id="TIGR01071">
    <property type="entry name" value="rplO_bact"/>
    <property type="match status" value="1"/>
</dbReference>
<dbReference type="PANTHER" id="PTHR12934">
    <property type="entry name" value="50S RIBOSOMAL PROTEIN L15"/>
    <property type="match status" value="1"/>
</dbReference>
<dbReference type="PANTHER" id="PTHR12934:SF11">
    <property type="entry name" value="LARGE RIBOSOMAL SUBUNIT PROTEIN UL15M"/>
    <property type="match status" value="1"/>
</dbReference>
<dbReference type="Pfam" id="PF00828">
    <property type="entry name" value="Ribosomal_L27A"/>
    <property type="match status" value="1"/>
</dbReference>
<dbReference type="SUPFAM" id="SSF52080">
    <property type="entry name" value="Ribosomal proteins L15p and L18e"/>
    <property type="match status" value="1"/>
</dbReference>
<dbReference type="PROSITE" id="PS00475">
    <property type="entry name" value="RIBOSOMAL_L15"/>
    <property type="match status" value="1"/>
</dbReference>
<sequence>MSDPIKLHDLRPAKGANKAKTRVGRGEASKGKTAGRGTKGTKARNKVPAYFEGGQMPLQMRLPKLKGFKNNNKVIFQVVNVSDLEKAFPNGGDVAVADLVAAGLVRAKQPVKVLGNGEISVKLNVTAQKFSGSAKEKIEKAGGSVTEA</sequence>
<gene>
    <name evidence="1" type="primary">rplO</name>
    <name type="ordered locus">cu0353</name>
</gene>
<reference key="1">
    <citation type="journal article" date="2008" name="J. Biotechnol.">
        <title>The lifestyle of Corynebacterium urealyticum derived from its complete genome sequence established by pyrosequencing.</title>
        <authorList>
            <person name="Tauch A."/>
            <person name="Trost E."/>
            <person name="Tilker A."/>
            <person name="Ludewig U."/>
            <person name="Schneiker S."/>
            <person name="Goesmann A."/>
            <person name="Arnold W."/>
            <person name="Bekel T."/>
            <person name="Brinkrolf K."/>
            <person name="Brune I."/>
            <person name="Goetker S."/>
            <person name="Kalinowski J."/>
            <person name="Kamp P.-B."/>
            <person name="Lobo F.P."/>
            <person name="Viehoever P."/>
            <person name="Weisshaar B."/>
            <person name="Soriano F."/>
            <person name="Droege M."/>
            <person name="Puehler A."/>
        </authorList>
    </citation>
    <scope>NUCLEOTIDE SEQUENCE [LARGE SCALE GENOMIC DNA]</scope>
    <source>
        <strain>ATCC 43042 / DSM 7109</strain>
    </source>
</reference>
<accession>B1VEX4</accession>